<dbReference type="EMBL" id="AM711867">
    <property type="protein sequence ID" value="CAN01209.1"/>
    <property type="molecule type" value="Genomic_DNA"/>
</dbReference>
<dbReference type="RefSeq" id="WP_012037851.1">
    <property type="nucleotide sequence ID" value="NC_009480.1"/>
</dbReference>
<dbReference type="SMR" id="A5CQ56"/>
<dbReference type="KEGG" id="cmi:CMM_1165"/>
<dbReference type="eggNOG" id="COG0711">
    <property type="taxonomic scope" value="Bacteria"/>
</dbReference>
<dbReference type="HOGENOM" id="CLU_079215_5_2_11"/>
<dbReference type="OrthoDB" id="5243563at2"/>
<dbReference type="Proteomes" id="UP000001564">
    <property type="component" value="Chromosome"/>
</dbReference>
<dbReference type="GO" id="GO:0005886">
    <property type="term" value="C:plasma membrane"/>
    <property type="evidence" value="ECO:0007669"/>
    <property type="project" value="UniProtKB-SubCell"/>
</dbReference>
<dbReference type="GO" id="GO:0045259">
    <property type="term" value="C:proton-transporting ATP synthase complex"/>
    <property type="evidence" value="ECO:0007669"/>
    <property type="project" value="UniProtKB-KW"/>
</dbReference>
<dbReference type="GO" id="GO:0046933">
    <property type="term" value="F:proton-transporting ATP synthase activity, rotational mechanism"/>
    <property type="evidence" value="ECO:0007669"/>
    <property type="project" value="UniProtKB-UniRule"/>
</dbReference>
<dbReference type="GO" id="GO:0046961">
    <property type="term" value="F:proton-transporting ATPase activity, rotational mechanism"/>
    <property type="evidence" value="ECO:0007669"/>
    <property type="project" value="TreeGrafter"/>
</dbReference>
<dbReference type="CDD" id="cd06503">
    <property type="entry name" value="ATP-synt_Fo_b"/>
    <property type="match status" value="1"/>
</dbReference>
<dbReference type="Gene3D" id="1.20.5.620">
    <property type="entry name" value="F1F0 ATP synthase subunit B, membrane domain"/>
    <property type="match status" value="1"/>
</dbReference>
<dbReference type="HAMAP" id="MF_01398">
    <property type="entry name" value="ATP_synth_b_bprime"/>
    <property type="match status" value="1"/>
</dbReference>
<dbReference type="InterPro" id="IPR028987">
    <property type="entry name" value="ATP_synth_B-like_membr_sf"/>
</dbReference>
<dbReference type="InterPro" id="IPR002146">
    <property type="entry name" value="ATP_synth_b/b'su_bac/chlpt"/>
</dbReference>
<dbReference type="InterPro" id="IPR005864">
    <property type="entry name" value="ATP_synth_F0_bsu_bac"/>
</dbReference>
<dbReference type="InterPro" id="IPR050059">
    <property type="entry name" value="ATP_synthase_B_chain"/>
</dbReference>
<dbReference type="NCBIfam" id="TIGR01144">
    <property type="entry name" value="ATP_synt_b"/>
    <property type="match status" value="1"/>
</dbReference>
<dbReference type="NCBIfam" id="NF004412">
    <property type="entry name" value="PRK05759.1-3"/>
    <property type="match status" value="1"/>
</dbReference>
<dbReference type="PANTHER" id="PTHR33445:SF1">
    <property type="entry name" value="ATP SYNTHASE SUBUNIT B"/>
    <property type="match status" value="1"/>
</dbReference>
<dbReference type="PANTHER" id="PTHR33445">
    <property type="entry name" value="ATP SYNTHASE SUBUNIT B', CHLOROPLASTIC"/>
    <property type="match status" value="1"/>
</dbReference>
<dbReference type="Pfam" id="PF00430">
    <property type="entry name" value="ATP-synt_B"/>
    <property type="match status" value="1"/>
</dbReference>
<dbReference type="SUPFAM" id="SSF81573">
    <property type="entry name" value="F1F0 ATP synthase subunit B, membrane domain"/>
    <property type="match status" value="1"/>
</dbReference>
<proteinExistence type="inferred from homology"/>
<accession>A5CQ56</accession>
<name>ATPF_CLAM3</name>
<organism>
    <name type="scientific">Clavibacter michiganensis subsp. michiganensis (strain NCPPB 382)</name>
    <dbReference type="NCBI Taxonomy" id="443906"/>
    <lineage>
        <taxon>Bacteria</taxon>
        <taxon>Bacillati</taxon>
        <taxon>Actinomycetota</taxon>
        <taxon>Actinomycetes</taxon>
        <taxon>Micrococcales</taxon>
        <taxon>Microbacteriaceae</taxon>
        <taxon>Clavibacter</taxon>
    </lineage>
</organism>
<keyword id="KW-0066">ATP synthesis</keyword>
<keyword id="KW-1003">Cell membrane</keyword>
<keyword id="KW-0138">CF(0)</keyword>
<keyword id="KW-0375">Hydrogen ion transport</keyword>
<keyword id="KW-0406">Ion transport</keyword>
<keyword id="KW-0472">Membrane</keyword>
<keyword id="KW-0812">Transmembrane</keyword>
<keyword id="KW-1133">Transmembrane helix</keyword>
<keyword id="KW-0813">Transport</keyword>
<comment type="function">
    <text evidence="1">F(1)F(0) ATP synthase produces ATP from ADP in the presence of a proton or sodium gradient. F-type ATPases consist of two structural domains, F(1) containing the extramembraneous catalytic core and F(0) containing the membrane proton channel, linked together by a central stalk and a peripheral stalk. During catalysis, ATP synthesis in the catalytic domain of F(1) is coupled via a rotary mechanism of the central stalk subunits to proton translocation.</text>
</comment>
<comment type="function">
    <text evidence="1">Component of the F(0) channel, it forms part of the peripheral stalk, linking F(1) to F(0).</text>
</comment>
<comment type="subunit">
    <text evidence="1">F-type ATPases have 2 components, F(1) - the catalytic core - and F(0) - the membrane proton channel. F(1) has five subunits: alpha(3), beta(3), gamma(1), delta(1), epsilon(1). F(0) has three main subunits: a(1), b(2) and c(10-14). The alpha and beta chains form an alternating ring which encloses part of the gamma chain. F(1) is attached to F(0) by a central stalk formed by the gamma and epsilon chains, while a peripheral stalk is formed by the delta and b chains.</text>
</comment>
<comment type="subcellular location">
    <subcellularLocation>
        <location evidence="1">Cell membrane</location>
        <topology evidence="1">Single-pass membrane protein</topology>
    </subcellularLocation>
</comment>
<comment type="similarity">
    <text evidence="1">Belongs to the ATPase B chain family.</text>
</comment>
<evidence type="ECO:0000255" key="1">
    <source>
        <dbReference type="HAMAP-Rule" id="MF_01398"/>
    </source>
</evidence>
<protein>
    <recommendedName>
        <fullName evidence="1">ATP synthase subunit b</fullName>
    </recommendedName>
    <alternativeName>
        <fullName evidence="1">ATP synthase F(0) sector subunit b</fullName>
    </alternativeName>
    <alternativeName>
        <fullName evidence="1">ATPase subunit I</fullName>
    </alternativeName>
    <alternativeName>
        <fullName evidence="1">F-type ATPase subunit b</fullName>
        <shortName evidence="1">F-ATPase subunit b</shortName>
    </alternativeName>
</protein>
<sequence length="188" mass="19801">MLTPHNVMAAGEEAPSILLPAVYDIVWSAVVFVVLLVVIWKYALPRVYAMLDGRTEAIAGGIEKAERAQAEADAAKAELTAQLAEARAEAGRIREQARVDATAIAAEIKEQATADAARITASAQQQIEAERQQAVVSLRSEVGSLAIDLASGVIGQSLTDDQRSTALVDRFLADLEASETAGRTGSAS</sequence>
<feature type="chain" id="PRO_0000368417" description="ATP synthase subunit b">
    <location>
        <begin position="1"/>
        <end position="188"/>
    </location>
</feature>
<feature type="transmembrane region" description="Helical" evidence="1">
    <location>
        <begin position="19"/>
        <end position="39"/>
    </location>
</feature>
<gene>
    <name evidence="1" type="primary">atpF</name>
    <name type="ordered locus">CMM_1165</name>
</gene>
<reference key="1">
    <citation type="journal article" date="2008" name="J. Bacteriol.">
        <title>The genome sequence of the tomato-pathogenic actinomycete Clavibacter michiganensis subsp. michiganensis NCPPB382 reveals a large island involved in pathogenicity.</title>
        <authorList>
            <person name="Gartemann K.-H."/>
            <person name="Abt B."/>
            <person name="Bekel T."/>
            <person name="Burger A."/>
            <person name="Engemann J."/>
            <person name="Fluegel M."/>
            <person name="Gaigalat L."/>
            <person name="Goesmann A."/>
            <person name="Graefen I."/>
            <person name="Kalinowski J."/>
            <person name="Kaup O."/>
            <person name="Kirchner O."/>
            <person name="Krause L."/>
            <person name="Linke B."/>
            <person name="McHardy A."/>
            <person name="Meyer F."/>
            <person name="Pohle S."/>
            <person name="Rueckert C."/>
            <person name="Schneiker S."/>
            <person name="Zellermann E.-M."/>
            <person name="Puehler A."/>
            <person name="Eichenlaub R."/>
            <person name="Kaiser O."/>
            <person name="Bartels D."/>
        </authorList>
    </citation>
    <scope>NUCLEOTIDE SEQUENCE [LARGE SCALE GENOMIC DNA]</scope>
    <source>
        <strain>NCPPB 382</strain>
    </source>
</reference>